<evidence type="ECO:0000250" key="1">
    <source>
        <dbReference type="UniProtKB" id="Q9QYJ7"/>
    </source>
</evidence>
<evidence type="ECO:0000255" key="2">
    <source>
        <dbReference type="PROSITE-ProRule" id="PRU00160"/>
    </source>
</evidence>
<evidence type="ECO:0000255" key="3">
    <source>
        <dbReference type="PROSITE-ProRule" id="PRU10044"/>
    </source>
</evidence>
<evidence type="ECO:0000269" key="4">
    <source>
    </source>
</evidence>
<evidence type="ECO:0000269" key="5">
    <source>
    </source>
</evidence>
<evidence type="ECO:0000269" key="6">
    <source>
    </source>
</evidence>
<evidence type="ECO:0000269" key="7">
    <source ref="3"/>
</evidence>
<evidence type="ECO:0000305" key="8"/>
<evidence type="ECO:0000312" key="9">
    <source>
        <dbReference type="HGNC" id="HGNC:19681"/>
    </source>
</evidence>
<evidence type="ECO:0007829" key="10">
    <source>
        <dbReference type="PDB" id="2GWO"/>
    </source>
</evidence>
<evidence type="ECO:0007829" key="11">
    <source>
        <dbReference type="PDB" id="2PQ5"/>
    </source>
</evidence>
<feature type="chain" id="PRO_0000094820" description="Dual specificity protein phosphatase 13B">
    <location>
        <begin position="1"/>
        <end position="198"/>
    </location>
</feature>
<feature type="domain" description="Tyrosine-protein phosphatase" evidence="2">
    <location>
        <begin position="45"/>
        <end position="193"/>
    </location>
</feature>
<feature type="active site" description="Phosphocysteine intermediate" evidence="2">
    <location>
        <position position="138"/>
    </location>
</feature>
<feature type="splice variant" id="VSP_037858" description="In isoform 4." evidence="8">
    <original>M</original>
    <variation>MAETSLPELGGEDKATPCPSILELEELLRAGKSSCSRVDEVWPNLFIGDAM</variation>
    <location>
        <position position="1"/>
    </location>
</feature>
<feature type="splice variant" id="VSP_061945" description="In isoform 5.">
    <original>M</original>
    <variation>MPQVGGRPLSHLERSQWGMRRTAWSSLPPCPTASHWVSLAKPAASWVPVSFSGPGTAYQREKMFFPVCTFPSHWSRGSGAVSKDRTPSPTRHQAHILVPLKIQLRRVPDSFSQQMPETSYLTRVGPDIQCWPESWGM</variation>
    <location>
        <position position="1"/>
    </location>
</feature>
<feature type="sequence variant" id="VAR_057130" description="In dbSNP:rs16932004.">
    <original>R</original>
    <variation>Q</variation>
    <location>
        <position position="62"/>
    </location>
</feature>
<feature type="sequence variant" id="VAR_025431" description="In dbSNP:rs3088142." evidence="7">
    <original>C</original>
    <variation>Y</variation>
    <location>
        <position position="156"/>
    </location>
</feature>
<feature type="sequence variant" id="VAR_057131" description="In dbSNP:rs16931996.">
    <original>R</original>
    <variation>G</variation>
    <location>
        <position position="190"/>
    </location>
</feature>
<feature type="sequence conflict" description="In Ref. 3; CAG33375." evidence="8" ref="3">
    <original>K</original>
    <variation>E</variation>
    <location>
        <position position="82"/>
    </location>
</feature>
<feature type="helix" evidence="11">
    <location>
        <begin position="28"/>
        <end position="37"/>
    </location>
</feature>
<feature type="strand" evidence="11">
    <location>
        <begin position="43"/>
        <end position="50"/>
    </location>
</feature>
<feature type="strand" evidence="11">
    <location>
        <begin position="53"/>
        <end position="56"/>
    </location>
</feature>
<feature type="helix" evidence="11">
    <location>
        <begin position="58"/>
        <end position="62"/>
    </location>
</feature>
<feature type="helix" evidence="11">
    <location>
        <begin position="64"/>
        <end position="70"/>
    </location>
</feature>
<feature type="strand" evidence="11">
    <location>
        <begin position="74"/>
        <end position="77"/>
    </location>
</feature>
<feature type="helix" evidence="11">
    <location>
        <begin position="88"/>
        <end position="91"/>
    </location>
</feature>
<feature type="turn" evidence="11">
    <location>
        <begin position="92"/>
        <end position="94"/>
    </location>
</feature>
<feature type="strand" evidence="11">
    <location>
        <begin position="98"/>
        <end position="101"/>
    </location>
</feature>
<feature type="helix" evidence="11">
    <location>
        <begin position="112"/>
        <end position="115"/>
    </location>
</feature>
<feature type="helix" evidence="11">
    <location>
        <begin position="116"/>
        <end position="127"/>
    </location>
</feature>
<feature type="strand" evidence="10">
    <location>
        <begin position="129"/>
        <end position="131"/>
    </location>
</feature>
<feature type="strand" evidence="11">
    <location>
        <begin position="134"/>
        <end position="137"/>
    </location>
</feature>
<feature type="strand" evidence="11">
    <location>
        <begin position="139"/>
        <end position="143"/>
    </location>
</feature>
<feature type="helix" evidence="11">
    <location>
        <begin position="144"/>
        <end position="156"/>
    </location>
</feature>
<feature type="helix" evidence="11">
    <location>
        <begin position="161"/>
        <end position="168"/>
    </location>
</feature>
<feature type="turn" evidence="11">
    <location>
        <begin position="169"/>
        <end position="171"/>
    </location>
</feature>
<feature type="helix" evidence="11">
    <location>
        <begin position="178"/>
        <end position="192"/>
    </location>
</feature>
<name>DS13B_HUMAN</name>
<reference key="1">
    <citation type="journal article" date="1999" name="Biochem. J.">
        <title>Molecular cloning and characterization of a novel dual-specificity protein phosphatase possibly involved in spermatogenesis.</title>
        <authorList>
            <person name="Nakamura K."/>
            <person name="Shima H."/>
            <person name="Watanabe M."/>
            <person name="Haneji T."/>
            <person name="Kikuchi K."/>
        </authorList>
    </citation>
    <scope>NUCLEOTIDE SEQUENCE [MRNA] (ISOFORM 1)</scope>
    <scope>FUNCTION</scope>
    <scope>TISSUE SPECIFICITY</scope>
    <source>
        <tissue>Skeletal muscle</tissue>
    </source>
</reference>
<reference key="2">
    <citation type="submission" date="2003-02" db="EMBL/GenBank/DDBJ databases">
        <title>Identification of a novel dual specificity phosphatase, SKRP4.</title>
        <authorList>
            <person name="Zama T."/>
            <person name="Aoki R."/>
            <person name="Murata M."/>
            <person name="Ikeda Y."/>
        </authorList>
    </citation>
    <scope>NUCLEOTIDE SEQUENCE [MRNA] (ISOFORM 1)</scope>
    <source>
        <tissue>Skeletal muscle</tissue>
    </source>
</reference>
<reference key="3">
    <citation type="submission" date="2004-06" db="EMBL/GenBank/DDBJ databases">
        <title>Cloning of human full open reading frames in Gateway(TM) system entry vector (pDONR201).</title>
        <authorList>
            <person name="Ebert L."/>
            <person name="Schick M."/>
            <person name="Neubert P."/>
            <person name="Schatten R."/>
            <person name="Henze S."/>
            <person name="Korn B."/>
        </authorList>
    </citation>
    <scope>NUCLEOTIDE SEQUENCE [LARGE SCALE MRNA] (ISOFORM 1)</scope>
    <scope>VARIANT TYR-156</scope>
</reference>
<reference key="4">
    <citation type="journal article" date="2004" name="Nature">
        <title>The DNA sequence and comparative analysis of human chromosome 10.</title>
        <authorList>
            <person name="Deloukas P."/>
            <person name="Earthrowl M.E."/>
            <person name="Grafham D.V."/>
            <person name="Rubenfield M."/>
            <person name="French L."/>
            <person name="Steward C.A."/>
            <person name="Sims S.K."/>
            <person name="Jones M.C."/>
            <person name="Searle S."/>
            <person name="Scott C."/>
            <person name="Howe K."/>
            <person name="Hunt S.E."/>
            <person name="Andrews T.D."/>
            <person name="Gilbert J.G.R."/>
            <person name="Swarbreck D."/>
            <person name="Ashurst J.L."/>
            <person name="Taylor A."/>
            <person name="Battles J."/>
            <person name="Bird C.P."/>
            <person name="Ainscough R."/>
            <person name="Almeida J.P."/>
            <person name="Ashwell R.I.S."/>
            <person name="Ambrose K.D."/>
            <person name="Babbage A.K."/>
            <person name="Bagguley C.L."/>
            <person name="Bailey J."/>
            <person name="Banerjee R."/>
            <person name="Bates K."/>
            <person name="Beasley H."/>
            <person name="Bray-Allen S."/>
            <person name="Brown A.J."/>
            <person name="Brown J.Y."/>
            <person name="Burford D.C."/>
            <person name="Burrill W."/>
            <person name="Burton J."/>
            <person name="Cahill P."/>
            <person name="Camire D."/>
            <person name="Carter N.P."/>
            <person name="Chapman J.C."/>
            <person name="Clark S.Y."/>
            <person name="Clarke G."/>
            <person name="Clee C.M."/>
            <person name="Clegg S."/>
            <person name="Corby N."/>
            <person name="Coulson A."/>
            <person name="Dhami P."/>
            <person name="Dutta I."/>
            <person name="Dunn M."/>
            <person name="Faulkner L."/>
            <person name="Frankish A."/>
            <person name="Frankland J.A."/>
            <person name="Garner P."/>
            <person name="Garnett J."/>
            <person name="Gribble S."/>
            <person name="Griffiths C."/>
            <person name="Grocock R."/>
            <person name="Gustafson E."/>
            <person name="Hammond S."/>
            <person name="Harley J.L."/>
            <person name="Hart E."/>
            <person name="Heath P.D."/>
            <person name="Ho T.P."/>
            <person name="Hopkins B."/>
            <person name="Horne J."/>
            <person name="Howden P.J."/>
            <person name="Huckle E."/>
            <person name="Hynds C."/>
            <person name="Johnson C."/>
            <person name="Johnson D."/>
            <person name="Kana A."/>
            <person name="Kay M."/>
            <person name="Kimberley A.M."/>
            <person name="Kershaw J.K."/>
            <person name="Kokkinaki M."/>
            <person name="Laird G.K."/>
            <person name="Lawlor S."/>
            <person name="Lee H.M."/>
            <person name="Leongamornlert D.A."/>
            <person name="Laird G."/>
            <person name="Lloyd C."/>
            <person name="Lloyd D.M."/>
            <person name="Loveland J."/>
            <person name="Lovell J."/>
            <person name="McLaren S."/>
            <person name="McLay K.E."/>
            <person name="McMurray A."/>
            <person name="Mashreghi-Mohammadi M."/>
            <person name="Matthews L."/>
            <person name="Milne S."/>
            <person name="Nickerson T."/>
            <person name="Nguyen M."/>
            <person name="Overton-Larty E."/>
            <person name="Palmer S.A."/>
            <person name="Pearce A.V."/>
            <person name="Peck A.I."/>
            <person name="Pelan S."/>
            <person name="Phillimore B."/>
            <person name="Porter K."/>
            <person name="Rice C.M."/>
            <person name="Rogosin A."/>
            <person name="Ross M.T."/>
            <person name="Sarafidou T."/>
            <person name="Sehra H.K."/>
            <person name="Shownkeen R."/>
            <person name="Skuce C.D."/>
            <person name="Smith M."/>
            <person name="Standring L."/>
            <person name="Sycamore N."/>
            <person name="Tester J."/>
            <person name="Thorpe A."/>
            <person name="Torcasso W."/>
            <person name="Tracey A."/>
            <person name="Tromans A."/>
            <person name="Tsolas J."/>
            <person name="Wall M."/>
            <person name="Walsh J."/>
            <person name="Wang H."/>
            <person name="Weinstock K."/>
            <person name="West A.P."/>
            <person name="Willey D.L."/>
            <person name="Whitehead S.L."/>
            <person name="Wilming L."/>
            <person name="Wray P.W."/>
            <person name="Young L."/>
            <person name="Chen Y."/>
            <person name="Lovering R.C."/>
            <person name="Moschonas N.K."/>
            <person name="Siebert R."/>
            <person name="Fechtel K."/>
            <person name="Bentley D."/>
            <person name="Durbin R.M."/>
            <person name="Hubbard T."/>
            <person name="Doucette-Stamm L."/>
            <person name="Beck S."/>
            <person name="Smith D.R."/>
            <person name="Rogers J."/>
        </authorList>
    </citation>
    <scope>NUCLEOTIDE SEQUENCE [LARGE SCALE GENOMIC DNA]</scope>
</reference>
<reference key="5">
    <citation type="submission" date="2005-07" db="EMBL/GenBank/DDBJ databases">
        <authorList>
            <person name="Mural R.J."/>
            <person name="Istrail S."/>
            <person name="Sutton G.G."/>
            <person name="Florea L."/>
            <person name="Halpern A.L."/>
            <person name="Mobarry C.M."/>
            <person name="Lippert R."/>
            <person name="Walenz B."/>
            <person name="Shatkay H."/>
            <person name="Dew I."/>
            <person name="Miller J.R."/>
            <person name="Flanigan M.J."/>
            <person name="Edwards N.J."/>
            <person name="Bolanos R."/>
            <person name="Fasulo D."/>
            <person name="Halldorsson B.V."/>
            <person name="Hannenhalli S."/>
            <person name="Turner R."/>
            <person name="Yooseph S."/>
            <person name="Lu F."/>
            <person name="Nusskern D.R."/>
            <person name="Shue B.C."/>
            <person name="Zheng X.H."/>
            <person name="Zhong F."/>
            <person name="Delcher A.L."/>
            <person name="Huson D.H."/>
            <person name="Kravitz S.A."/>
            <person name="Mouchard L."/>
            <person name="Reinert K."/>
            <person name="Remington K.A."/>
            <person name="Clark A.G."/>
            <person name="Waterman M.S."/>
            <person name="Eichler E.E."/>
            <person name="Adams M.D."/>
            <person name="Hunkapiller M.W."/>
            <person name="Myers E.W."/>
            <person name="Venter J.C."/>
        </authorList>
    </citation>
    <scope>NUCLEOTIDE SEQUENCE [LARGE SCALE GENOMIC DNA]</scope>
</reference>
<reference key="6">
    <citation type="journal article" date="2004" name="J. Biol. Chem.">
        <title>Characterization of two distinct dual specificity phosphatases encoded in alternative open reading frames of a single gene located on human chromosome 10q22.2.</title>
        <authorList>
            <person name="Chen H.-H."/>
            <person name="Luche R."/>
            <person name="Wei B."/>
            <person name="Tonks N.K."/>
        </authorList>
    </citation>
    <scope>ALTERNATIVE SPLICING (ISOFORMS 1 AND 4)</scope>
    <scope>TISSUE SPECIFICITY</scope>
</reference>
<reference key="7">
    <citation type="journal article" date="2011" name="Mol. Cell. Biochem.">
        <title>DUSP13B/TMDP inhibits stress-activated MAPKs and suppresses AP-1-dependent gene expression.</title>
        <authorList>
            <person name="Katagiri C."/>
            <person name="Masuda K."/>
            <person name="Nomura M."/>
            <person name="Tanoue K."/>
            <person name="Fujita S."/>
            <person name="Yamashita Y."/>
            <person name="Katakura R."/>
            <person name="Shiiba K."/>
            <person name="Nomura E."/>
            <person name="Sato M."/>
            <person name="Tanuma N."/>
            <person name="Shima H."/>
        </authorList>
    </citation>
    <scope>FUNCTION AS MAPK8 AND MAPK14 PHOSPHATASE</scope>
</reference>
<reference key="8">
    <citation type="journal article" date="2007" name="Proteins">
        <title>Crystal structure of human TMDP, a testis-specific dual specificity protein phosphatase: implications for substrate specificity.</title>
        <authorList>
            <person name="Kim S.J."/>
            <person name="Jeong D.G."/>
            <person name="Yoon T.S."/>
            <person name="Son J.H."/>
            <person name="Cho S.K."/>
            <person name="Ryu S.E."/>
            <person name="Kim J.H."/>
        </authorList>
    </citation>
    <scope>X-RAY CRYSTALLOGRAPHY (2.4 ANGSTROMS)</scope>
</reference>
<gene>
    <name evidence="9" type="primary">DUSP13B</name>
    <name type="synonym">DUSP13</name>
    <name type="synonym">SKRP4</name>
    <name type="synonym">TMDP</name>
</gene>
<proteinExistence type="evidence at protein level"/>
<protein>
    <recommendedName>
        <fullName evidence="8">Dual specificity protein phosphatase 13B</fullName>
        <ecNumber evidence="1">3.1.3.16</ecNumber>
        <ecNumber evidence="1">3.1.3.48</ecNumber>
    </recommendedName>
    <alternativeName>
        <fullName>Dual specificity phosphatase SKRP4</fullName>
    </alternativeName>
    <alternativeName>
        <fullName>Testis- and skeletal-muscle-specific DSP</fullName>
    </alternativeName>
</protein>
<comment type="function">
    <text evidence="4 6">Dual specificity phosphatase that dephosphorylates MAPK8/JNK and MAPK14/p38, but not MAPK1/ERK2, in vitro (PubMed:21360282). Exhibits intrinsic phosphatase activity towards both phospho-seryl/threonyl and -tyrosyl residues, with similar specific activities in vitro (PubMed:10585869).</text>
</comment>
<comment type="catalytic activity">
    <reaction evidence="1 3">
        <text>O-phospho-L-tyrosyl-[protein] + H2O = L-tyrosyl-[protein] + phosphate</text>
        <dbReference type="Rhea" id="RHEA:10684"/>
        <dbReference type="Rhea" id="RHEA-COMP:10136"/>
        <dbReference type="Rhea" id="RHEA-COMP:20101"/>
        <dbReference type="ChEBI" id="CHEBI:15377"/>
        <dbReference type="ChEBI" id="CHEBI:43474"/>
        <dbReference type="ChEBI" id="CHEBI:46858"/>
        <dbReference type="ChEBI" id="CHEBI:61978"/>
        <dbReference type="EC" id="3.1.3.48"/>
    </reaction>
</comment>
<comment type="catalytic activity">
    <reaction evidence="1">
        <text>O-phospho-L-seryl-[protein] + H2O = L-seryl-[protein] + phosphate</text>
        <dbReference type="Rhea" id="RHEA:20629"/>
        <dbReference type="Rhea" id="RHEA-COMP:9863"/>
        <dbReference type="Rhea" id="RHEA-COMP:11604"/>
        <dbReference type="ChEBI" id="CHEBI:15377"/>
        <dbReference type="ChEBI" id="CHEBI:29999"/>
        <dbReference type="ChEBI" id="CHEBI:43474"/>
        <dbReference type="ChEBI" id="CHEBI:83421"/>
        <dbReference type="EC" id="3.1.3.16"/>
    </reaction>
</comment>
<comment type="catalytic activity">
    <reaction evidence="1">
        <text>O-phospho-L-threonyl-[protein] + H2O = L-threonyl-[protein] + phosphate</text>
        <dbReference type="Rhea" id="RHEA:47004"/>
        <dbReference type="Rhea" id="RHEA-COMP:11060"/>
        <dbReference type="Rhea" id="RHEA-COMP:11605"/>
        <dbReference type="ChEBI" id="CHEBI:15377"/>
        <dbReference type="ChEBI" id="CHEBI:30013"/>
        <dbReference type="ChEBI" id="CHEBI:43474"/>
        <dbReference type="ChEBI" id="CHEBI:61977"/>
        <dbReference type="EC" id="3.1.3.16"/>
    </reaction>
</comment>
<comment type="interaction">
    <interactant intactId="EBI-749800">
        <id>Q9UII6</id>
    </interactant>
    <interactant intactId="EBI-749920">
        <id>Q9P1Z2</id>
        <label>CALCOCO1</label>
    </interactant>
    <organismsDiffer>false</organismsDiffer>
    <experiments>6</experiments>
</comment>
<comment type="interaction">
    <interactant intactId="EBI-749800">
        <id>Q9UII6</id>
    </interactant>
    <interactant intactId="EBI-751319">
        <id>Q9H257</id>
        <label>CARD9</label>
    </interactant>
    <organismsDiffer>false</organismsDiffer>
    <experiments>3</experiments>
</comment>
<comment type="interaction">
    <interactant intactId="EBI-749800">
        <id>Q9UII6</id>
    </interactant>
    <interactant intactId="EBI-11530605">
        <id>Q9H257-2</id>
        <label>CARD9</label>
    </interactant>
    <organismsDiffer>false</organismsDiffer>
    <experiments>8</experiments>
</comment>
<comment type="interaction">
    <interactant intactId="EBI-749800">
        <id>Q9UII6</id>
    </interactant>
    <interactant intactId="EBI-743290">
        <id>Q96ED9</id>
        <label>HOOK2</label>
    </interactant>
    <organismsDiffer>false</organismsDiffer>
    <experiments>3</experiments>
</comment>
<comment type="interaction">
    <interactant intactId="EBI-749800">
        <id>Q9UII6</id>
    </interactant>
    <interactant intactId="EBI-7116203">
        <id>O75031</id>
        <label>HSF2BP</label>
    </interactant>
    <organismsDiffer>false</organismsDiffer>
    <experiments>3</experiments>
</comment>
<comment type="interaction">
    <interactant intactId="EBI-749800">
        <id>Q9UII6</id>
    </interactant>
    <interactant intactId="EBI-6509505">
        <id>Q0VD86</id>
        <label>INCA1</label>
    </interactant>
    <organismsDiffer>false</organismsDiffer>
    <experiments>3</experiments>
</comment>
<comment type="interaction">
    <interactant intactId="EBI-749800">
        <id>Q9UII6</id>
    </interactant>
    <interactant intactId="EBI-351935">
        <id>P02545</id>
        <label>LMNA</label>
    </interactant>
    <organismsDiffer>false</organismsDiffer>
    <experiments>7</experiments>
</comment>
<comment type="interaction">
    <interactant intactId="EBI-749800">
        <id>Q9UII6</id>
    </interactant>
    <interactant intactId="EBI-949255">
        <id>Q58EX7</id>
        <label>PLEKHG4</label>
    </interactant>
    <organismsDiffer>false</organismsDiffer>
    <experiments>3</experiments>
</comment>
<comment type="interaction">
    <interactant intactId="EBI-749800">
        <id>Q9UII6</id>
    </interactant>
    <interactant intactId="EBI-19952306">
        <id>O14492-2</id>
        <label>SH2B2</label>
    </interactant>
    <organismsDiffer>false</organismsDiffer>
    <experiments>3</experiments>
</comment>
<comment type="interaction">
    <interactant intactId="EBI-749800">
        <id>Q9UII6</id>
    </interactant>
    <interactant intactId="EBI-359224">
        <id>Q13077</id>
        <label>TRAF1</label>
    </interactant>
    <organismsDiffer>false</organismsDiffer>
    <experiments>3</experiments>
</comment>
<comment type="interaction">
    <interactant intactId="EBI-749800">
        <id>Q9UII6</id>
    </interactant>
    <interactant intactId="EBI-527853">
        <id>Q9UGI0</id>
        <label>ZRANB1</label>
    </interactant>
    <organismsDiffer>false</organismsDiffer>
    <experiments>3</experiments>
</comment>
<comment type="alternative products">
    <event type="alternative splicing"/>
    <isoform>
        <id>Q9UII6-1</id>
        <name>1</name>
        <name>TMDP</name>
        <sequence type="displayed"/>
    </isoform>
    <isoform>
        <id>Q9UII6-4</id>
        <name>4</name>
        <name>TMDP-L2</name>
        <sequence type="described" ref="VSP_037858"/>
    </isoform>
    <isoform>
        <id>Q9UII6-5</id>
        <name>5</name>
        <sequence type="described" ref="VSP_061945"/>
    </isoform>
    <text>Additional isoforms seem to exist.</text>
</comment>
<comment type="tissue specificity">
    <text evidence="4 5">Highly expressed in the testis (at protein level) (PubMed:10585869, PubMed:15252030). Also found in the skeletal muscle (PubMed:15252030).</text>
</comment>
<comment type="similarity">
    <text evidence="8">Belongs to the protein-tyrosine phosphatase family. Non-receptor class dual specificity subfamily.</text>
</comment>
<organism>
    <name type="scientific">Homo sapiens</name>
    <name type="common">Human</name>
    <dbReference type="NCBI Taxonomy" id="9606"/>
    <lineage>
        <taxon>Eukaryota</taxon>
        <taxon>Metazoa</taxon>
        <taxon>Chordata</taxon>
        <taxon>Craniata</taxon>
        <taxon>Vertebrata</taxon>
        <taxon>Euteleostomi</taxon>
        <taxon>Mammalia</taxon>
        <taxon>Eutheria</taxon>
        <taxon>Euarchontoglires</taxon>
        <taxon>Primates</taxon>
        <taxon>Haplorrhini</taxon>
        <taxon>Catarrhini</taxon>
        <taxon>Hominidae</taxon>
        <taxon>Homo</taxon>
    </lineage>
</organism>
<dbReference type="EC" id="3.1.3.16" evidence="1"/>
<dbReference type="EC" id="3.1.3.48" evidence="1"/>
<dbReference type="EMBL" id="AB027004">
    <property type="protein sequence ID" value="BAA89412.1"/>
    <property type="molecule type" value="mRNA"/>
</dbReference>
<dbReference type="EMBL" id="AB103375">
    <property type="protein sequence ID" value="BAD91014.1"/>
    <property type="molecule type" value="mRNA"/>
</dbReference>
<dbReference type="EMBL" id="CR457094">
    <property type="protein sequence ID" value="CAG33375.1"/>
    <property type="molecule type" value="mRNA"/>
</dbReference>
<dbReference type="EMBL" id="AL392111">
    <property type="status" value="NOT_ANNOTATED_CDS"/>
    <property type="molecule type" value="Genomic_DNA"/>
</dbReference>
<dbReference type="EMBL" id="CH471083">
    <property type="protein sequence ID" value="EAW54561.1"/>
    <property type="molecule type" value="Genomic_DNA"/>
</dbReference>
<dbReference type="EMBL" id="CH471083">
    <property type="protein sequence ID" value="EAW54563.1"/>
    <property type="molecule type" value="Genomic_DNA"/>
</dbReference>
<dbReference type="CCDS" id="CCDS31224.1">
    <molecule id="Q9UII6-4"/>
</dbReference>
<dbReference type="CCDS" id="CCDS7346.1">
    <molecule id="Q9UII6-1"/>
</dbReference>
<dbReference type="CCDS" id="CCDS86105.1">
    <molecule id="Q9UII6-5"/>
</dbReference>
<dbReference type="RefSeq" id="NP_001007273.1">
    <molecule id="Q9UII6-4"/>
    <property type="nucleotide sequence ID" value="NM_001007272.2"/>
</dbReference>
<dbReference type="RefSeq" id="NP_001307772.1">
    <molecule id="Q9UII6-1"/>
    <property type="nucleotide sequence ID" value="NM_001320843.2"/>
</dbReference>
<dbReference type="RefSeq" id="NP_001350443.1">
    <molecule id="Q9UII6-5"/>
    <property type="nucleotide sequence ID" value="NM_001363514.2"/>
</dbReference>
<dbReference type="RefSeq" id="NP_057448.3">
    <molecule id="Q9UII6-1"/>
    <property type="nucleotide sequence ID" value="NM_016364.3"/>
</dbReference>
<dbReference type="RefSeq" id="XP_005269941.3">
    <property type="nucleotide sequence ID" value="XM_005269884.4"/>
</dbReference>
<dbReference type="RefSeq" id="XP_005269947.1">
    <property type="nucleotide sequence ID" value="XM_005269890.1"/>
</dbReference>
<dbReference type="RefSeq" id="XP_011538156.1">
    <property type="nucleotide sequence ID" value="XM_011539854.2"/>
</dbReference>
<dbReference type="RefSeq" id="XP_011538157.1">
    <property type="nucleotide sequence ID" value="XM_011539855.1"/>
</dbReference>
<dbReference type="RefSeq" id="XP_011538158.1">
    <property type="nucleotide sequence ID" value="XM_011539856.2"/>
</dbReference>
<dbReference type="PDB" id="2GWO">
    <property type="method" value="X-ray"/>
    <property type="resolution" value="2.40 A"/>
    <property type="chains" value="A/B/C/D=1-198"/>
</dbReference>
<dbReference type="PDB" id="2PQ5">
    <property type="method" value="X-ray"/>
    <property type="resolution" value="2.30 A"/>
    <property type="chains" value="A/B/C/D=1-198"/>
</dbReference>
<dbReference type="PDBsum" id="2GWO"/>
<dbReference type="PDBsum" id="2PQ5"/>
<dbReference type="SMR" id="Q9UII6"/>
<dbReference type="BioGRID" id="119380">
    <property type="interactions" value="103"/>
</dbReference>
<dbReference type="FunCoup" id="Q9UII6">
    <property type="interactions" value="423"/>
</dbReference>
<dbReference type="IntAct" id="Q9UII6">
    <property type="interactions" value="15"/>
</dbReference>
<dbReference type="MINT" id="Q9UII6"/>
<dbReference type="STRING" id="9606.ENSP00000475626"/>
<dbReference type="DEPOD" id="DUSP13"/>
<dbReference type="iPTMnet" id="Q9UII6"/>
<dbReference type="PhosphoSitePlus" id="Q9UII6"/>
<dbReference type="BioMuta" id="DUSP13"/>
<dbReference type="DMDM" id="257051044"/>
<dbReference type="jPOST" id="Q9UII6"/>
<dbReference type="MassIVE" id="Q9UII6"/>
<dbReference type="PaxDb" id="9606-ENSP00000361785"/>
<dbReference type="PeptideAtlas" id="Q9UII6"/>
<dbReference type="ProteomicsDB" id="84529">
    <molecule id="Q9UII6-1"/>
</dbReference>
<dbReference type="ProteomicsDB" id="84532">
    <molecule id="Q9UII6-4"/>
</dbReference>
<dbReference type="Antibodypedia" id="15503">
    <property type="antibodies" value="256 antibodies from 27 providers"/>
</dbReference>
<dbReference type="DNASU" id="51207"/>
<dbReference type="Ensembl" id="ENST00000472493.6">
    <molecule id="Q9UII6-1"/>
    <property type="protein sequence ID" value="ENSP00000444580.1"/>
    <property type="gene ID" value="ENSG00000079393.22"/>
</dbReference>
<dbReference type="Ensembl" id="ENST00000478873.7">
    <molecule id="Q9UII6-5"/>
    <property type="protein sequence ID" value="ENSP00000475626.1"/>
    <property type="gene ID" value="ENSG00000079393.22"/>
</dbReference>
<dbReference type="Ensembl" id="ENST00000707121.1">
    <molecule id="Q9UII6-1"/>
    <property type="protein sequence ID" value="ENSP00000516749.1"/>
    <property type="gene ID" value="ENSG00000079393.22"/>
</dbReference>
<dbReference type="GeneID" id="51207"/>
<dbReference type="KEGG" id="hsa:51207"/>
<dbReference type="MANE-Select" id="ENST00000478873.7">
    <molecule id="Q9UII6-5"/>
    <property type="protein sequence ID" value="ENSP00000475626.1"/>
    <property type="RefSeq nucleotide sequence ID" value="NM_001363514.2"/>
    <property type="RefSeq protein sequence ID" value="NP_001350443.1"/>
</dbReference>
<dbReference type="UCSC" id="uc001jwr.4">
    <molecule id="Q9UII6-1"/>
    <property type="organism name" value="human"/>
</dbReference>
<dbReference type="AGR" id="HGNC:19681"/>
<dbReference type="CTD" id="51207"/>
<dbReference type="DisGeNET" id="51207"/>
<dbReference type="GeneCards" id="DUSP13B"/>
<dbReference type="HGNC" id="HGNC:19681">
    <property type="gene designation" value="DUSP13B"/>
</dbReference>
<dbReference type="HPA" id="ENSG00000079393">
    <property type="expression patterns" value="Tissue enhanced (skeletal muscle, testis, tongue)"/>
</dbReference>
<dbReference type="MIM" id="613191">
    <property type="type" value="gene"/>
</dbReference>
<dbReference type="neXtProt" id="NX_Q9UII6"/>
<dbReference type="OpenTargets" id="ENSG00000079393"/>
<dbReference type="PharmGKB" id="PA134939640"/>
<dbReference type="VEuPathDB" id="HostDB:ENSG00000079393"/>
<dbReference type="eggNOG" id="KOG1716">
    <property type="taxonomic scope" value="Eukaryota"/>
</dbReference>
<dbReference type="GeneTree" id="ENSGT00940000154628"/>
<dbReference type="HOGENOM" id="CLU_027074_4_0_1"/>
<dbReference type="InParanoid" id="Q9UII6"/>
<dbReference type="PAN-GO" id="Q9UII6">
    <property type="GO annotations" value="4 GO annotations based on evolutionary models"/>
</dbReference>
<dbReference type="PhylomeDB" id="Q9UII6"/>
<dbReference type="TreeFam" id="TF105128"/>
<dbReference type="PathwayCommons" id="Q9UII6"/>
<dbReference type="SignaLink" id="Q9UII6"/>
<dbReference type="BioGRID-ORCS" id="51207">
    <property type="hits" value="20 hits in 1170 CRISPR screens"/>
</dbReference>
<dbReference type="ChiTaRS" id="DUSP13">
    <property type="organism name" value="human"/>
</dbReference>
<dbReference type="EvolutionaryTrace" id="Q9UII6"/>
<dbReference type="GenomeRNAi" id="51207"/>
<dbReference type="Pharos" id="Q9UII6">
    <property type="development level" value="Tbio"/>
</dbReference>
<dbReference type="PRO" id="PR:Q9UII6"/>
<dbReference type="Proteomes" id="UP000005640">
    <property type="component" value="Chromosome 10"/>
</dbReference>
<dbReference type="RNAct" id="Q9UII6">
    <property type="molecule type" value="protein"/>
</dbReference>
<dbReference type="Bgee" id="ENSG00000079393">
    <property type="expression patterns" value="Expressed in hindlimb stylopod muscle and 127 other cell types or tissues"/>
</dbReference>
<dbReference type="ExpressionAtlas" id="Q9UII6">
    <property type="expression patterns" value="baseline and differential"/>
</dbReference>
<dbReference type="GO" id="GO:0005737">
    <property type="term" value="C:cytoplasm"/>
    <property type="evidence" value="ECO:0000318"/>
    <property type="project" value="GO_Central"/>
</dbReference>
<dbReference type="GO" id="GO:0033549">
    <property type="term" value="F:MAP kinase phosphatase activity"/>
    <property type="evidence" value="ECO:0000318"/>
    <property type="project" value="GO_Central"/>
</dbReference>
<dbReference type="GO" id="GO:0016791">
    <property type="term" value="F:phosphatase activity"/>
    <property type="evidence" value="ECO:0000314"/>
    <property type="project" value="UniProtKB"/>
</dbReference>
<dbReference type="GO" id="GO:0004722">
    <property type="term" value="F:protein serine/threonine phosphatase activity"/>
    <property type="evidence" value="ECO:0007669"/>
    <property type="project" value="UniProtKB-EC"/>
</dbReference>
<dbReference type="GO" id="GO:0004725">
    <property type="term" value="F:protein tyrosine phosphatase activity"/>
    <property type="evidence" value="ECO:0007669"/>
    <property type="project" value="UniProtKB-EC"/>
</dbReference>
<dbReference type="GO" id="GO:0008138">
    <property type="term" value="F:protein tyrosine/serine/threonine phosphatase activity"/>
    <property type="evidence" value="ECO:0000318"/>
    <property type="project" value="GO_Central"/>
</dbReference>
<dbReference type="GO" id="GO:0016311">
    <property type="term" value="P:dephosphorylation"/>
    <property type="evidence" value="ECO:0000314"/>
    <property type="project" value="UniProtKB"/>
</dbReference>
<dbReference type="GO" id="GO:0051321">
    <property type="term" value="P:meiotic cell cycle"/>
    <property type="evidence" value="ECO:0000304"/>
    <property type="project" value="ProtInc"/>
</dbReference>
<dbReference type="GO" id="GO:0043409">
    <property type="term" value="P:negative regulation of MAPK cascade"/>
    <property type="evidence" value="ECO:0000318"/>
    <property type="project" value="GO_Central"/>
</dbReference>
<dbReference type="GO" id="GO:0006470">
    <property type="term" value="P:protein dephosphorylation"/>
    <property type="evidence" value="ECO:0000304"/>
    <property type="project" value="ProtInc"/>
</dbReference>
<dbReference type="GO" id="GO:0007283">
    <property type="term" value="P:spermatogenesis"/>
    <property type="evidence" value="ECO:0000304"/>
    <property type="project" value="ProtInc"/>
</dbReference>
<dbReference type="CDD" id="cd14577">
    <property type="entry name" value="DUSP13B"/>
    <property type="match status" value="1"/>
</dbReference>
<dbReference type="FunFam" id="3.90.190.10:FF:000059">
    <property type="entry name" value="Dual specificity phosphatase 13, isoform CRA_b"/>
    <property type="match status" value="1"/>
</dbReference>
<dbReference type="Gene3D" id="3.90.190.10">
    <property type="entry name" value="Protein tyrosine phosphatase superfamily"/>
    <property type="match status" value="1"/>
</dbReference>
<dbReference type="InterPro" id="IPR020405">
    <property type="entry name" value="Atypical_DUSP_subfamA"/>
</dbReference>
<dbReference type="InterPro" id="IPR000340">
    <property type="entry name" value="Dual-sp_phosphatase_cat-dom"/>
</dbReference>
<dbReference type="InterPro" id="IPR029021">
    <property type="entry name" value="Prot-tyrosine_phosphatase-like"/>
</dbReference>
<dbReference type="InterPro" id="IPR016130">
    <property type="entry name" value="Tyr_Pase_AS"/>
</dbReference>
<dbReference type="InterPro" id="IPR000387">
    <property type="entry name" value="Tyr_Pase_dom"/>
</dbReference>
<dbReference type="InterPro" id="IPR020422">
    <property type="entry name" value="TYR_PHOSPHATASE_DUAL_dom"/>
</dbReference>
<dbReference type="PANTHER" id="PTHR45682">
    <property type="entry name" value="AGAP008228-PA"/>
    <property type="match status" value="1"/>
</dbReference>
<dbReference type="PANTHER" id="PTHR45682:SF10">
    <property type="entry name" value="DUAL SPECIFICITY PROTEIN PHOSPHATASE 13 ISOFORM B"/>
    <property type="match status" value="1"/>
</dbReference>
<dbReference type="Pfam" id="PF00782">
    <property type="entry name" value="DSPc"/>
    <property type="match status" value="1"/>
</dbReference>
<dbReference type="PRINTS" id="PR01908">
    <property type="entry name" value="ADSPHPHTASE"/>
</dbReference>
<dbReference type="PRINTS" id="PR01909">
    <property type="entry name" value="ADSPHPHTASEA"/>
</dbReference>
<dbReference type="SMART" id="SM00195">
    <property type="entry name" value="DSPc"/>
    <property type="match status" value="1"/>
</dbReference>
<dbReference type="SUPFAM" id="SSF52799">
    <property type="entry name" value="(Phosphotyrosine protein) phosphatases II"/>
    <property type="match status" value="1"/>
</dbReference>
<dbReference type="PROSITE" id="PS00383">
    <property type="entry name" value="TYR_PHOSPHATASE_1"/>
    <property type="match status" value="1"/>
</dbReference>
<dbReference type="PROSITE" id="PS50056">
    <property type="entry name" value="TYR_PHOSPHATASE_2"/>
    <property type="match status" value="1"/>
</dbReference>
<dbReference type="PROSITE" id="PS50054">
    <property type="entry name" value="TYR_PHOSPHATASE_DUAL"/>
    <property type="match status" value="1"/>
</dbReference>
<accession>Q9UII6</accession>
<accession>A0A024QZR6</accession>
<accession>A8K776</accession>
<accession>A8K782</accession>
<accession>B3KPY1</accession>
<accession>B3KXT0</accession>
<accession>B4DUK0</accession>
<accession>Q5JSC6</accession>
<accession>Q6IAR0</accession>
<accession>Q96GC2</accession>
<accession>U3KQ82</accession>
<sequence length="198" mass="22149">MDSLQKQDLRRPKIHGAVQASPYQPPTLASLQRLLWVRQAATLNHIDEVWPSLFLGDAYAARDKSKLIQLGITHVVNAAAGKFQVDTGAKFYRGMSLEYYGIEADDNPFFDLSVYFLPVARYIRAALSVPQGRVLVHCAMGVSRSATLVLAFLMICENMTLVEAIQTVQAHRNICPNSGFLRQLQVLDNRLGRETGRF</sequence>
<keyword id="KW-0002">3D-structure</keyword>
<keyword id="KW-0025">Alternative splicing</keyword>
<keyword id="KW-0378">Hydrolase</keyword>
<keyword id="KW-0904">Protein phosphatase</keyword>
<keyword id="KW-1267">Proteomics identification</keyword>
<keyword id="KW-1185">Reference proteome</keyword>